<protein>
    <recommendedName>
        <fullName evidence="1">C4-dicarboxylate transport protein</fullName>
    </recommendedName>
</protein>
<evidence type="ECO:0000255" key="1">
    <source>
        <dbReference type="HAMAP-Rule" id="MF_01300"/>
    </source>
</evidence>
<organism>
    <name type="scientific">Dechloromonas aromatica (strain RCB)</name>
    <dbReference type="NCBI Taxonomy" id="159087"/>
    <lineage>
        <taxon>Bacteria</taxon>
        <taxon>Pseudomonadati</taxon>
        <taxon>Pseudomonadota</taxon>
        <taxon>Betaproteobacteria</taxon>
        <taxon>Rhodocyclales</taxon>
        <taxon>Azonexaceae</taxon>
        <taxon>Dechloromonas</taxon>
    </lineage>
</organism>
<reference key="1">
    <citation type="journal article" date="2009" name="BMC Genomics">
        <title>Metabolic analysis of the soil microbe Dechloromonas aromatica str. RCB: indications of a surprisingly complex life-style and cryptic anaerobic pathways for aromatic degradation.</title>
        <authorList>
            <person name="Salinero K.K."/>
            <person name="Keller K."/>
            <person name="Feil W.S."/>
            <person name="Feil H."/>
            <person name="Trong S."/>
            <person name="Di Bartolo G."/>
            <person name="Lapidus A."/>
        </authorList>
    </citation>
    <scope>NUCLEOTIDE SEQUENCE [LARGE SCALE GENOMIC DNA]</scope>
    <source>
        <strain>RCB</strain>
    </source>
</reference>
<feature type="chain" id="PRO_0000321983" description="C4-dicarboxylate transport protein">
    <location>
        <begin position="1"/>
        <end position="449"/>
    </location>
</feature>
<feature type="transmembrane region" description="Helical" evidence="1">
    <location>
        <begin position="5"/>
        <end position="25"/>
    </location>
</feature>
<feature type="transmembrane region" description="Helical" evidence="1">
    <location>
        <begin position="45"/>
        <end position="65"/>
    </location>
</feature>
<feature type="transmembrane region" description="Helical" evidence="1">
    <location>
        <begin position="77"/>
        <end position="97"/>
    </location>
</feature>
<feature type="transmembrane region" description="Helical" evidence="1">
    <location>
        <begin position="149"/>
        <end position="169"/>
    </location>
</feature>
<feature type="transmembrane region" description="Helical" evidence="1">
    <location>
        <begin position="185"/>
        <end position="205"/>
    </location>
</feature>
<feature type="transmembrane region" description="Helical" evidence="1">
    <location>
        <begin position="231"/>
        <end position="251"/>
    </location>
</feature>
<feature type="transmembrane region" description="Helical" evidence="1">
    <location>
        <begin position="298"/>
        <end position="318"/>
    </location>
</feature>
<feature type="transmembrane region" description="Helical" evidence="1">
    <location>
        <begin position="332"/>
        <end position="352"/>
    </location>
</feature>
<feature type="transmembrane region" description="Helical" evidence="1">
    <location>
        <begin position="353"/>
        <end position="373"/>
    </location>
</feature>
<comment type="function">
    <text evidence="1">Responsible for the transport of dicarboxylates such as succinate, fumarate, and malate from the periplasm across the membrane.</text>
</comment>
<comment type="subcellular location">
    <subcellularLocation>
        <location evidence="1">Cell inner membrane</location>
        <topology evidence="1">Multi-pass membrane protein</topology>
    </subcellularLocation>
</comment>
<comment type="similarity">
    <text evidence="1">Belongs to the dicarboxylate/amino acid:cation symporter (DAACS) (TC 2.A.23) family.</text>
</comment>
<accession>Q47BQ7</accession>
<proteinExistence type="inferred from homology"/>
<dbReference type="EMBL" id="CP000089">
    <property type="protein sequence ID" value="AAZ47724.1"/>
    <property type="molecule type" value="Genomic_DNA"/>
</dbReference>
<dbReference type="SMR" id="Q47BQ7"/>
<dbReference type="STRING" id="159087.Daro_2994"/>
<dbReference type="KEGG" id="dar:Daro_2994"/>
<dbReference type="eggNOG" id="COG1301">
    <property type="taxonomic scope" value="Bacteria"/>
</dbReference>
<dbReference type="HOGENOM" id="CLU_019375_7_0_4"/>
<dbReference type="OrthoDB" id="9766690at2"/>
<dbReference type="GO" id="GO:0005886">
    <property type="term" value="C:plasma membrane"/>
    <property type="evidence" value="ECO:0007669"/>
    <property type="project" value="UniProtKB-SubCell"/>
</dbReference>
<dbReference type="GO" id="GO:0015138">
    <property type="term" value="F:fumarate transmembrane transporter activity"/>
    <property type="evidence" value="ECO:0007669"/>
    <property type="project" value="TreeGrafter"/>
</dbReference>
<dbReference type="GO" id="GO:0015366">
    <property type="term" value="F:malate:proton symporter activity"/>
    <property type="evidence" value="ECO:0007669"/>
    <property type="project" value="TreeGrafter"/>
</dbReference>
<dbReference type="GO" id="GO:0015141">
    <property type="term" value="F:succinate transmembrane transporter activity"/>
    <property type="evidence" value="ECO:0007669"/>
    <property type="project" value="TreeGrafter"/>
</dbReference>
<dbReference type="GO" id="GO:0070778">
    <property type="term" value="P:L-aspartate transmembrane transport"/>
    <property type="evidence" value="ECO:0007669"/>
    <property type="project" value="TreeGrafter"/>
</dbReference>
<dbReference type="FunFam" id="1.10.3860.10:FF:000001">
    <property type="entry name" value="C4-dicarboxylate transport protein"/>
    <property type="match status" value="1"/>
</dbReference>
<dbReference type="Gene3D" id="1.10.3860.10">
    <property type="entry name" value="Sodium:dicarboxylate symporter"/>
    <property type="match status" value="1"/>
</dbReference>
<dbReference type="HAMAP" id="MF_01300">
    <property type="entry name" value="C4_dicarb_transport"/>
    <property type="match status" value="1"/>
</dbReference>
<dbReference type="InterPro" id="IPR023954">
    <property type="entry name" value="C4_dicarb_transport"/>
</dbReference>
<dbReference type="InterPro" id="IPR001991">
    <property type="entry name" value="Na-dicarboxylate_symporter"/>
</dbReference>
<dbReference type="InterPro" id="IPR018107">
    <property type="entry name" value="Na-dicarboxylate_symporter_CS"/>
</dbReference>
<dbReference type="InterPro" id="IPR036458">
    <property type="entry name" value="Na:dicarbo_symporter_sf"/>
</dbReference>
<dbReference type="NCBIfam" id="NF002461">
    <property type="entry name" value="PRK01663.1"/>
    <property type="match status" value="1"/>
</dbReference>
<dbReference type="NCBIfam" id="NF009587">
    <property type="entry name" value="PRK13027.1"/>
    <property type="match status" value="1"/>
</dbReference>
<dbReference type="PANTHER" id="PTHR42865:SF1">
    <property type="entry name" value="AEROBIC C4-DICARBOXYLATE TRANSPORT PROTEIN"/>
    <property type="match status" value="1"/>
</dbReference>
<dbReference type="PANTHER" id="PTHR42865">
    <property type="entry name" value="PROTON/GLUTAMATE-ASPARTATE SYMPORTER"/>
    <property type="match status" value="1"/>
</dbReference>
<dbReference type="Pfam" id="PF00375">
    <property type="entry name" value="SDF"/>
    <property type="match status" value="1"/>
</dbReference>
<dbReference type="PRINTS" id="PR00173">
    <property type="entry name" value="EDTRNSPORT"/>
</dbReference>
<dbReference type="SUPFAM" id="SSF118215">
    <property type="entry name" value="Proton glutamate symport protein"/>
    <property type="match status" value="1"/>
</dbReference>
<dbReference type="PROSITE" id="PS00713">
    <property type="entry name" value="NA_DICARBOXYL_SYMP_1"/>
    <property type="match status" value="1"/>
</dbReference>
<dbReference type="PROSITE" id="PS00714">
    <property type="entry name" value="NA_DICARBOXYL_SYMP_2"/>
    <property type="match status" value="1"/>
</dbReference>
<keyword id="KW-0997">Cell inner membrane</keyword>
<keyword id="KW-1003">Cell membrane</keyword>
<keyword id="KW-0472">Membrane</keyword>
<keyword id="KW-0769">Symport</keyword>
<keyword id="KW-0812">Transmembrane</keyword>
<keyword id="KW-1133">Transmembrane helix</keyword>
<keyword id="KW-0813">Transport</keyword>
<gene>
    <name evidence="1" type="primary">dctA</name>
    <name type="ordered locus">Daro_2994</name>
</gene>
<sequence>MAKKAVFKSLYFQVLVAIAIGVSLGHFYPETGAAMKPLGDGFIKLIKMIIAPIIFCTIVVGIAGMEDMKKVGKTGGLAVLYFEVVSTIALVIGLIVVNVWAPGVGMNVDVSTLDTKGIAKYAQPGQMQTTTDFLMNIIPTSVVDAFAKGDMLQVLFFSILFGYAMHSFGERGKPVFELIEKLSHVLFGIVGVIMKVAPIGAFGAMAYTIGKHGVGSLAQLASLMGAFYLTCVIFILGVLGSIAAFHGFSIIKLIKYIKEELFLVLGTSSSESALPRLMAKMENAGAQKSVVGLVVPTGYSFNLDGTSIYLTMAAVFIAQATNTPLDLQHQVTLLVILLLTSKGAAGVTGSGFIVLAATLSAVGTVPVAGLALILGIDRFMSEARALTNFIGNSVATLVVAKWCNALDAKRMNAVLNNETSDEAENPELVLDDAPDVIIPHVPRPIIDHH</sequence>
<name>DCTA_DECAR</name>